<sequence>MKRQSERDSSPSGRGSSSSAKRPREREREAEAGGRRAAHKASGGAKHPVPARARDKPRGSGSGGGGHRDGRGTGDANHRASSGRSSGSGAGGGGRGGKASGDPGASGMSPRASPLPPPPPPPGAEPACPGSSAAAPEYKTLLISSLSPALPAEHLEDRLFHQFKRFGEISLRLSHTPELGRVAYVNFRHPQDAREARQHALARQLLLYDRPLKVEPVYLRGGGGSSRRSSSSSAAASTPPPGPPAPADPLGYLPLHGGYQYKQRSLSPVAAPPLREPRARHAAAAFALDAAAAAAVGLSRERALDYYGLYDDRGRPYGYPAVCEEDLMPEDDQRATRNLFIGNLDHSVSEVELRRAFEKYGIIEEVVIKRPARGQGGAYAFLKFQNLDMAHRAKVAMSGRVIGRNPIKIGYGKANPTTRLWVGGLGPNTSLAALAREFDRFGSIRTIDHVKGDSFAYIQYESLDAAQAACAKMRGFPLGGPDRRLRVDFAKAEETRYPQQYQPSPLPVHYELLTDGYTRHRNLDADLVRDRTPPHLLYSDRDRTFLEGDWTSPSKSSDRRNSLEGYSRSVRSRSGERWGADGDRGLPKPWEERRKRRSLSSDRGRTTHSPYEERSRTKGSGQQSERGSDRTPERSRKENHSSEGTKESSSNSLSNSRHGAEERGHHHHHHEAADSSHGKKARDSERNHRTTEAEPKPLEEPKHETKKLKNLSEYAQTLQLGWNGLLVLKNSCFPTSMHILEGDQGVISSLLKDHTSGSKLTQLKIAQRLRLDQPKLDEVTRRIKQGSPNGYAVLLATQATPSGLGTEGMPTVEPGLQRRLLRNLVSYLKQKQAAGVISLPVGGSKGRDGTGMLYAFPPCDFSQQYLQSALRTLGKLEEEHMVIVIVRDTA</sequence>
<accession>Q8NDT2</accession>
<accession>A4QPG7</accession>
<accession>Q6QE19</accession>
<accession>Q9BV96</accession>
<proteinExistence type="evidence at protein level"/>
<protein>
    <recommendedName>
        <fullName evidence="13">Putative RNA-binding protein 15B</fullName>
    </recommendedName>
    <alternativeName>
        <fullName evidence="11 12">One-twenty two protein 3</fullName>
        <shortName evidence="12">HsOTT3</shortName>
        <shortName evidence="11">HuOTT3</shortName>
    </alternativeName>
    <alternativeName>
        <fullName evidence="12">RNA-binding motif protein 15B</fullName>
    </alternativeName>
</protein>
<evidence type="ECO:0000250" key="1">
    <source>
        <dbReference type="UniProtKB" id="Q6PHZ5"/>
    </source>
</evidence>
<evidence type="ECO:0000255" key="2"/>
<evidence type="ECO:0000255" key="3">
    <source>
        <dbReference type="PROSITE-ProRule" id="PRU00176"/>
    </source>
</evidence>
<evidence type="ECO:0000255" key="4">
    <source>
        <dbReference type="PROSITE-ProRule" id="PRU00249"/>
    </source>
</evidence>
<evidence type="ECO:0000256" key="5">
    <source>
        <dbReference type="SAM" id="MobiDB-lite"/>
    </source>
</evidence>
<evidence type="ECO:0000269" key="6">
    <source>
    </source>
</evidence>
<evidence type="ECO:0000269" key="7">
    <source>
    </source>
</evidence>
<evidence type="ECO:0000269" key="8">
    <source>
    </source>
</evidence>
<evidence type="ECO:0000269" key="9">
    <source>
    </source>
</evidence>
<evidence type="ECO:0000303" key="10">
    <source>
    </source>
</evidence>
<evidence type="ECO:0000303" key="11">
    <source>
    </source>
</evidence>
<evidence type="ECO:0000303" key="12">
    <source>
    </source>
</evidence>
<evidence type="ECO:0000305" key="13"/>
<evidence type="ECO:0000305" key="14">
    <source>
    </source>
</evidence>
<evidence type="ECO:0000312" key="15">
    <source>
        <dbReference type="HGNC" id="HGNC:24303"/>
    </source>
</evidence>
<evidence type="ECO:0007744" key="16">
    <source>
    </source>
</evidence>
<evidence type="ECO:0007744" key="17">
    <source>
    </source>
</evidence>
<evidence type="ECO:0007744" key="18">
    <source>
    </source>
</evidence>
<evidence type="ECO:0007744" key="19">
    <source>
    </source>
</evidence>
<evidence type="ECO:0007744" key="20">
    <source>
    </source>
</evidence>
<evidence type="ECO:0007744" key="21">
    <source>
    </source>
</evidence>
<dbReference type="EMBL" id="AC092037">
    <property type="status" value="NOT_ANNOTATED_CDS"/>
    <property type="molecule type" value="Genomic_DNA"/>
</dbReference>
<dbReference type="EMBL" id="BC001367">
    <property type="protein sequence ID" value="AAH01367.2"/>
    <property type="status" value="ALT_INIT"/>
    <property type="molecule type" value="mRNA"/>
</dbReference>
<dbReference type="EMBL" id="BC139836">
    <property type="protein sequence ID" value="AAI39837.1"/>
    <property type="molecule type" value="mRNA"/>
</dbReference>
<dbReference type="EMBL" id="AL831838">
    <property type="protein sequence ID" value="CAD38547.2"/>
    <property type="status" value="ALT_INIT"/>
    <property type="molecule type" value="mRNA"/>
</dbReference>
<dbReference type="EMBL" id="AY545557">
    <property type="protein sequence ID" value="AAS50153.1"/>
    <property type="status" value="ALT_SEQ"/>
    <property type="molecule type" value="mRNA"/>
</dbReference>
<dbReference type="CCDS" id="CCDS33764.1">
    <molecule id="Q8NDT2-1"/>
</dbReference>
<dbReference type="RefSeq" id="NP_037418.3">
    <molecule id="Q8NDT2-1"/>
    <property type="nucleotide sequence ID" value="NM_013286.4"/>
</dbReference>
<dbReference type="SMR" id="Q8NDT2"/>
<dbReference type="BioGRID" id="118943">
    <property type="interactions" value="104"/>
</dbReference>
<dbReference type="FunCoup" id="Q8NDT2">
    <property type="interactions" value="3664"/>
</dbReference>
<dbReference type="IntAct" id="Q8NDT2">
    <property type="interactions" value="63"/>
</dbReference>
<dbReference type="MINT" id="Q8NDT2"/>
<dbReference type="STRING" id="9606.ENSP00000454545"/>
<dbReference type="GlyGen" id="Q8NDT2">
    <property type="glycosylation" value="4 sites, 1 O-linked glycan (3 sites)"/>
</dbReference>
<dbReference type="iPTMnet" id="Q8NDT2"/>
<dbReference type="PhosphoSitePlus" id="Q8NDT2"/>
<dbReference type="BioMuta" id="RBM15B"/>
<dbReference type="DMDM" id="229463030"/>
<dbReference type="jPOST" id="Q8NDT2"/>
<dbReference type="MassIVE" id="Q8NDT2"/>
<dbReference type="PaxDb" id="9606-ENSP00000454545"/>
<dbReference type="PeptideAtlas" id="Q8NDT2"/>
<dbReference type="ProteomicsDB" id="73053">
    <molecule id="Q8NDT2-1"/>
</dbReference>
<dbReference type="Pumba" id="Q8NDT2"/>
<dbReference type="Antibodypedia" id="59712">
    <property type="antibodies" value="54 antibodies from 19 providers"/>
</dbReference>
<dbReference type="DNASU" id="29890"/>
<dbReference type="Ensembl" id="ENST00000563281.2">
    <molecule id="Q8NDT2-1"/>
    <property type="protein sequence ID" value="ENSP00000454545.1"/>
    <property type="gene ID" value="ENSG00000259956.2"/>
</dbReference>
<dbReference type="GeneID" id="29890"/>
<dbReference type="KEGG" id="hsa:29890"/>
<dbReference type="MANE-Select" id="ENST00000563281.2">
    <property type="protein sequence ID" value="ENSP00000454545.1"/>
    <property type="RefSeq nucleotide sequence ID" value="NM_013286.5"/>
    <property type="RefSeq protein sequence ID" value="NP_037418.3"/>
</dbReference>
<dbReference type="UCSC" id="uc003dbd.4">
    <molecule id="Q8NDT2-1"/>
    <property type="organism name" value="human"/>
</dbReference>
<dbReference type="AGR" id="HGNC:24303"/>
<dbReference type="CTD" id="29890"/>
<dbReference type="DisGeNET" id="29890"/>
<dbReference type="GeneCards" id="RBM15B"/>
<dbReference type="HGNC" id="HGNC:24303">
    <property type="gene designation" value="RBM15B"/>
</dbReference>
<dbReference type="HPA" id="ENSG00000259956">
    <property type="expression patterns" value="Low tissue specificity"/>
</dbReference>
<dbReference type="MIM" id="612602">
    <property type="type" value="gene"/>
</dbReference>
<dbReference type="neXtProt" id="NX_Q8NDT2"/>
<dbReference type="OpenTargets" id="ENSG00000259956"/>
<dbReference type="PharmGKB" id="PA134870079"/>
<dbReference type="VEuPathDB" id="HostDB:ENSG00000259956"/>
<dbReference type="eggNOG" id="KOG0112">
    <property type="taxonomic scope" value="Eukaryota"/>
</dbReference>
<dbReference type="GeneTree" id="ENSGT00940000160561"/>
<dbReference type="HOGENOM" id="CLU_012724_1_0_1"/>
<dbReference type="InParanoid" id="Q8NDT2"/>
<dbReference type="OMA" id="GLFRQFQ"/>
<dbReference type="OrthoDB" id="10050565at2759"/>
<dbReference type="PAN-GO" id="Q8NDT2">
    <property type="GO annotations" value="3 GO annotations based on evolutionary models"/>
</dbReference>
<dbReference type="PhylomeDB" id="Q8NDT2"/>
<dbReference type="TreeFam" id="TF354224"/>
<dbReference type="PathwayCommons" id="Q8NDT2"/>
<dbReference type="SignaLink" id="Q8NDT2"/>
<dbReference type="BioGRID-ORCS" id="29890">
    <property type="hits" value="12 hits in 1153 CRISPR screens"/>
</dbReference>
<dbReference type="CD-CODE" id="232F8A39">
    <property type="entry name" value="P-body"/>
</dbReference>
<dbReference type="CD-CODE" id="804901D1">
    <property type="entry name" value="Nuclear speckle"/>
</dbReference>
<dbReference type="ChiTaRS" id="RBM15B">
    <property type="organism name" value="human"/>
</dbReference>
<dbReference type="GenomeRNAi" id="29890"/>
<dbReference type="Pharos" id="Q8NDT2">
    <property type="development level" value="Tbio"/>
</dbReference>
<dbReference type="PRO" id="PR:Q8NDT2"/>
<dbReference type="Proteomes" id="UP000005640">
    <property type="component" value="Chromosome 3"/>
</dbReference>
<dbReference type="RNAct" id="Q8NDT2">
    <property type="molecule type" value="protein"/>
</dbReference>
<dbReference type="Bgee" id="ENSG00000259956">
    <property type="expression patterns" value="Expressed in ganglionic eminence and 190 other cell types or tissues"/>
</dbReference>
<dbReference type="GO" id="GO:0005635">
    <property type="term" value="C:nuclear envelope"/>
    <property type="evidence" value="ECO:0000314"/>
    <property type="project" value="UniProtKB"/>
</dbReference>
<dbReference type="GO" id="GO:0016607">
    <property type="term" value="C:nuclear speck"/>
    <property type="evidence" value="ECO:0000314"/>
    <property type="project" value="UniProtKB"/>
</dbReference>
<dbReference type="GO" id="GO:0005654">
    <property type="term" value="C:nucleoplasm"/>
    <property type="evidence" value="ECO:0000314"/>
    <property type="project" value="HPA"/>
</dbReference>
<dbReference type="GO" id="GO:0005634">
    <property type="term" value="C:nucleus"/>
    <property type="evidence" value="ECO:0000318"/>
    <property type="project" value="GO_Central"/>
</dbReference>
<dbReference type="GO" id="GO:0036396">
    <property type="term" value="C:RNA N6-methyladenosine methyltransferase complex"/>
    <property type="evidence" value="ECO:0000314"/>
    <property type="project" value="UniProtKB"/>
</dbReference>
<dbReference type="GO" id="GO:0003729">
    <property type="term" value="F:mRNA binding"/>
    <property type="evidence" value="ECO:0000318"/>
    <property type="project" value="GO_Central"/>
</dbReference>
<dbReference type="GO" id="GO:0003723">
    <property type="term" value="F:RNA binding"/>
    <property type="evidence" value="ECO:0000314"/>
    <property type="project" value="UniProtKB"/>
</dbReference>
<dbReference type="GO" id="GO:0009048">
    <property type="term" value="P:dosage compensation by inactivation of X chromosome"/>
    <property type="evidence" value="ECO:0000314"/>
    <property type="project" value="UniProtKB"/>
</dbReference>
<dbReference type="GO" id="GO:0006406">
    <property type="term" value="P:mRNA export from nucleus"/>
    <property type="evidence" value="ECO:0000250"/>
    <property type="project" value="UniProtKB"/>
</dbReference>
<dbReference type="GO" id="GO:0006397">
    <property type="term" value="P:mRNA processing"/>
    <property type="evidence" value="ECO:0007669"/>
    <property type="project" value="UniProtKB-KW"/>
</dbReference>
<dbReference type="GO" id="GO:0000381">
    <property type="term" value="P:regulation of alternative mRNA splicing, via spliceosome"/>
    <property type="evidence" value="ECO:0000314"/>
    <property type="project" value="UniProtKB"/>
</dbReference>
<dbReference type="GO" id="GO:0001510">
    <property type="term" value="P:RNA methylation"/>
    <property type="evidence" value="ECO:0000314"/>
    <property type="project" value="UniProtKB"/>
</dbReference>
<dbReference type="GO" id="GO:0008380">
    <property type="term" value="P:RNA splicing"/>
    <property type="evidence" value="ECO:0007669"/>
    <property type="project" value="UniProtKB-KW"/>
</dbReference>
<dbReference type="CDD" id="cd12554">
    <property type="entry name" value="RRM1_RBM15B"/>
    <property type="match status" value="1"/>
</dbReference>
<dbReference type="CDD" id="cd12556">
    <property type="entry name" value="RRM2_RBM15B"/>
    <property type="match status" value="1"/>
</dbReference>
<dbReference type="CDD" id="cd12558">
    <property type="entry name" value="RRM3_RBM15B"/>
    <property type="match status" value="1"/>
</dbReference>
<dbReference type="CDD" id="cd21550">
    <property type="entry name" value="SPOC_RBM15B"/>
    <property type="match status" value="1"/>
</dbReference>
<dbReference type="FunFam" id="3.30.70.330:FF:000195">
    <property type="entry name" value="RNA binding motif protein 15"/>
    <property type="match status" value="1"/>
</dbReference>
<dbReference type="FunFam" id="2.40.290.10:FF:000003">
    <property type="entry name" value="RNA-binding motif protein 15"/>
    <property type="match status" value="1"/>
</dbReference>
<dbReference type="FunFam" id="3.30.70.330:FF:000360">
    <property type="entry name" value="RNA-binding motif protein 15B"/>
    <property type="match status" value="1"/>
</dbReference>
<dbReference type="Gene3D" id="2.40.290.10">
    <property type="match status" value="1"/>
</dbReference>
<dbReference type="Gene3D" id="3.30.70.330">
    <property type="match status" value="3"/>
</dbReference>
<dbReference type="InterPro" id="IPR012677">
    <property type="entry name" value="Nucleotide-bd_a/b_plait_sf"/>
</dbReference>
<dbReference type="InterPro" id="IPR035979">
    <property type="entry name" value="RBD_domain_sf"/>
</dbReference>
<dbReference type="InterPro" id="IPR034475">
    <property type="entry name" value="RBM15B_RRM1"/>
</dbReference>
<dbReference type="InterPro" id="IPR034535">
    <property type="entry name" value="RBM15B_RRM2"/>
</dbReference>
<dbReference type="InterPro" id="IPR034536">
    <property type="entry name" value="RBM15B_RRM3"/>
</dbReference>
<dbReference type="InterPro" id="IPR000504">
    <property type="entry name" value="RRM_dom"/>
</dbReference>
<dbReference type="InterPro" id="IPR016194">
    <property type="entry name" value="SPOC-like_C_dom_sf"/>
</dbReference>
<dbReference type="InterPro" id="IPR012921">
    <property type="entry name" value="SPOC_C"/>
</dbReference>
<dbReference type="InterPro" id="IPR010912">
    <property type="entry name" value="SPOC_met"/>
</dbReference>
<dbReference type="PANTHER" id="PTHR23189">
    <property type="entry name" value="RNA RECOGNITION MOTIF-CONTAINING"/>
    <property type="match status" value="1"/>
</dbReference>
<dbReference type="Pfam" id="PF00076">
    <property type="entry name" value="RRM_1"/>
    <property type="match status" value="2"/>
</dbReference>
<dbReference type="Pfam" id="PF07744">
    <property type="entry name" value="SPOC"/>
    <property type="match status" value="1"/>
</dbReference>
<dbReference type="SMART" id="SM00360">
    <property type="entry name" value="RRM"/>
    <property type="match status" value="3"/>
</dbReference>
<dbReference type="SUPFAM" id="SSF54928">
    <property type="entry name" value="RNA-binding domain, RBD"/>
    <property type="match status" value="2"/>
</dbReference>
<dbReference type="SUPFAM" id="SSF100939">
    <property type="entry name" value="SPOC domain-like"/>
    <property type="match status" value="1"/>
</dbReference>
<dbReference type="PROSITE" id="PS50102">
    <property type="entry name" value="RRM"/>
    <property type="match status" value="3"/>
</dbReference>
<dbReference type="PROSITE" id="PS50917">
    <property type="entry name" value="SPOC"/>
    <property type="match status" value="1"/>
</dbReference>
<reference key="1">
    <citation type="journal article" date="2006" name="Nature">
        <title>The DNA sequence, annotation and analysis of human chromosome 3.</title>
        <authorList>
            <person name="Muzny D.M."/>
            <person name="Scherer S.E."/>
            <person name="Kaul R."/>
            <person name="Wang J."/>
            <person name="Yu J."/>
            <person name="Sudbrak R."/>
            <person name="Buhay C.J."/>
            <person name="Chen R."/>
            <person name="Cree A."/>
            <person name="Ding Y."/>
            <person name="Dugan-Rocha S."/>
            <person name="Gill R."/>
            <person name="Gunaratne P."/>
            <person name="Harris R.A."/>
            <person name="Hawes A.C."/>
            <person name="Hernandez J."/>
            <person name="Hodgson A.V."/>
            <person name="Hume J."/>
            <person name="Jackson A."/>
            <person name="Khan Z.M."/>
            <person name="Kovar-Smith C."/>
            <person name="Lewis L.R."/>
            <person name="Lozado R.J."/>
            <person name="Metzker M.L."/>
            <person name="Milosavljevic A."/>
            <person name="Miner G.R."/>
            <person name="Morgan M.B."/>
            <person name="Nazareth L.V."/>
            <person name="Scott G."/>
            <person name="Sodergren E."/>
            <person name="Song X.-Z."/>
            <person name="Steffen D."/>
            <person name="Wei S."/>
            <person name="Wheeler D.A."/>
            <person name="Wright M.W."/>
            <person name="Worley K.C."/>
            <person name="Yuan Y."/>
            <person name="Zhang Z."/>
            <person name="Adams C.Q."/>
            <person name="Ansari-Lari M.A."/>
            <person name="Ayele M."/>
            <person name="Brown M.J."/>
            <person name="Chen G."/>
            <person name="Chen Z."/>
            <person name="Clendenning J."/>
            <person name="Clerc-Blankenburg K.P."/>
            <person name="Chen R."/>
            <person name="Chen Z."/>
            <person name="Davis C."/>
            <person name="Delgado O."/>
            <person name="Dinh H.H."/>
            <person name="Dong W."/>
            <person name="Draper H."/>
            <person name="Ernst S."/>
            <person name="Fu G."/>
            <person name="Gonzalez-Garay M.L."/>
            <person name="Garcia D.K."/>
            <person name="Gillett W."/>
            <person name="Gu J."/>
            <person name="Hao B."/>
            <person name="Haugen E."/>
            <person name="Havlak P."/>
            <person name="He X."/>
            <person name="Hennig S."/>
            <person name="Hu S."/>
            <person name="Huang W."/>
            <person name="Jackson L.R."/>
            <person name="Jacob L.S."/>
            <person name="Kelly S.H."/>
            <person name="Kube M."/>
            <person name="Levy R."/>
            <person name="Li Z."/>
            <person name="Liu B."/>
            <person name="Liu J."/>
            <person name="Liu W."/>
            <person name="Lu J."/>
            <person name="Maheshwari M."/>
            <person name="Nguyen B.-V."/>
            <person name="Okwuonu G.O."/>
            <person name="Palmeiri A."/>
            <person name="Pasternak S."/>
            <person name="Perez L.M."/>
            <person name="Phelps K.A."/>
            <person name="Plopper F.J."/>
            <person name="Qiang B."/>
            <person name="Raymond C."/>
            <person name="Rodriguez R."/>
            <person name="Saenphimmachak C."/>
            <person name="Santibanez J."/>
            <person name="Shen H."/>
            <person name="Shen Y."/>
            <person name="Subramanian S."/>
            <person name="Tabor P.E."/>
            <person name="Verduzco D."/>
            <person name="Waldron L."/>
            <person name="Wang J."/>
            <person name="Wang J."/>
            <person name="Wang Q."/>
            <person name="Williams G.A."/>
            <person name="Wong G.K.-S."/>
            <person name="Yao Z."/>
            <person name="Zhang J."/>
            <person name="Zhang X."/>
            <person name="Zhao G."/>
            <person name="Zhou J."/>
            <person name="Zhou Y."/>
            <person name="Nelson D."/>
            <person name="Lehrach H."/>
            <person name="Reinhardt R."/>
            <person name="Naylor S.L."/>
            <person name="Yang H."/>
            <person name="Olson M."/>
            <person name="Weinstock G."/>
            <person name="Gibbs R.A."/>
        </authorList>
    </citation>
    <scope>NUCLEOTIDE SEQUENCE [LARGE SCALE GENOMIC DNA]</scope>
</reference>
<reference key="2">
    <citation type="journal article" date="2004" name="Genome Res.">
        <title>The status, quality, and expansion of the NIH full-length cDNA project: the Mammalian Gene Collection (MGC).</title>
        <authorList>
            <consortium name="The MGC Project Team"/>
        </authorList>
    </citation>
    <scope>NUCLEOTIDE SEQUENCE [LARGE SCALE MRNA] (ISOFORM 2)</scope>
    <source>
        <tissue>Colon</tissue>
    </source>
</reference>
<reference key="3">
    <citation type="journal article" date="2007" name="BMC Genomics">
        <title>The full-ORF clone resource of the German cDNA consortium.</title>
        <authorList>
            <person name="Bechtel S."/>
            <person name="Rosenfelder H."/>
            <person name="Duda A."/>
            <person name="Schmidt C.P."/>
            <person name="Ernst U."/>
            <person name="Wellenreuther R."/>
            <person name="Mehrle A."/>
            <person name="Schuster C."/>
            <person name="Bahr A."/>
            <person name="Bloecker H."/>
            <person name="Heubner D."/>
            <person name="Hoerlein A."/>
            <person name="Michel G."/>
            <person name="Wedler H."/>
            <person name="Koehrer K."/>
            <person name="Ottenwaelder B."/>
            <person name="Poustka A."/>
            <person name="Wiemann S."/>
            <person name="Schupp I."/>
        </authorList>
    </citation>
    <scope>NUCLEOTIDE SEQUENCE [LARGE SCALE MRNA] OF 155-890 (ISOFORM 1)</scope>
    <source>
        <tissue>Brain</tissue>
    </source>
</reference>
<reference key="4">
    <citation type="submission" date="2004-02" db="EMBL/GenBank/DDBJ databases">
        <authorList>
            <person name="Sales M.M."/>
            <person name="Ferrasi A.C."/>
            <person name="Pereira A.A."/>
            <person name="Pardini M.I.M.C."/>
            <person name="Camargo A.A."/>
        </authorList>
    </citation>
    <scope>NUCLEOTIDE SEQUENCE [MRNA] OF 633-780</scope>
    <source>
        <tissue>Head</tissue>
    </source>
</reference>
<reference key="5">
    <citation type="journal article" date="2005" name="J. Biol. Chem.">
        <title>Interaction of the Epstein-Barr virus mRNA export factor EB2 with human Spen proteins SHARP, OTT1, and a novel member of the family, OTT3, links Spen proteins with splicing regulation and mRNA export.</title>
        <authorList>
            <person name="Hiriart E."/>
            <person name="Gruffat H."/>
            <person name="Buisson M."/>
            <person name="Mikaelian I."/>
            <person name="Keppler S."/>
            <person name="Meresse P."/>
            <person name="Mercher T."/>
            <person name="Bernard O.A."/>
            <person name="Sergeant A."/>
            <person name="Manet E."/>
        </authorList>
    </citation>
    <scope>FUNCTION</scope>
    <scope>INTERACTION WITH EPSTEIN-BARR VIRUS BMLF1 (MICROBIAL INFECTION) AND NCOR2</scope>
    <scope>SUBCELLULAR LOCATION</scope>
    <scope>TISSUE SPECIFICITY</scope>
</reference>
<reference key="6">
    <citation type="journal article" date="2006" name="Cell">
        <title>Global, in vivo, and site-specific phosphorylation dynamics in signaling networks.</title>
        <authorList>
            <person name="Olsen J.V."/>
            <person name="Blagoev B."/>
            <person name="Gnad F."/>
            <person name="Macek B."/>
            <person name="Kumar C."/>
            <person name="Mortensen P."/>
            <person name="Mann M."/>
        </authorList>
    </citation>
    <scope>IDENTIFICATION BY MASS SPECTROMETRY [LARGE SCALE ANALYSIS]</scope>
    <source>
        <tissue>Cervix carcinoma</tissue>
    </source>
</reference>
<reference key="7">
    <citation type="journal article" date="2006" name="Nat. Biotechnol.">
        <title>A probability-based approach for high-throughput protein phosphorylation analysis and site localization.</title>
        <authorList>
            <person name="Beausoleil S.A."/>
            <person name="Villen J."/>
            <person name="Gerber S.A."/>
            <person name="Rush J."/>
            <person name="Gygi S.P."/>
        </authorList>
    </citation>
    <scope>IDENTIFICATION BY MASS SPECTROMETRY [LARGE SCALE ANALYSIS]</scope>
    <source>
        <tissue>Cervix carcinoma</tissue>
    </source>
</reference>
<reference key="8">
    <citation type="journal article" date="2008" name="J. Proteome Res.">
        <title>Combining protein-based IMAC, peptide-based IMAC, and MudPIT for efficient phosphoproteomic analysis.</title>
        <authorList>
            <person name="Cantin G.T."/>
            <person name="Yi W."/>
            <person name="Lu B."/>
            <person name="Park S.K."/>
            <person name="Xu T."/>
            <person name="Lee J.-D."/>
            <person name="Yates J.R. III"/>
        </authorList>
    </citation>
    <scope>IDENTIFICATION BY MASS SPECTROMETRY [LARGE SCALE ANALYSIS]</scope>
    <source>
        <tissue>Cervix carcinoma</tissue>
    </source>
</reference>
<reference key="9">
    <citation type="journal article" date="2008" name="Proc. Natl. Acad. Sci. U.S.A.">
        <title>A quantitative atlas of mitotic phosphorylation.</title>
        <authorList>
            <person name="Dephoure N."/>
            <person name="Zhou C."/>
            <person name="Villen J."/>
            <person name="Beausoleil S.A."/>
            <person name="Bakalarski C.E."/>
            <person name="Elledge S.J."/>
            <person name="Gygi S.P."/>
        </authorList>
    </citation>
    <scope>IDENTIFICATION BY MASS SPECTROMETRY [LARGE SCALE ANALYSIS]</scope>
    <source>
        <tissue>Cervix carcinoma</tissue>
    </source>
</reference>
<reference key="10">
    <citation type="journal article" date="2009" name="J. Biol. Chem.">
        <title>The RNA-binding motif protein 15B (RBM15B/OTT3) acts as cofactor of the nuclear export receptor NXF1.</title>
        <authorList>
            <person name="Uranishi H."/>
            <person name="Zolotukhin A.S."/>
            <person name="Lindtner S."/>
            <person name="Warming S."/>
            <person name="Zhang G.M."/>
            <person name="Bear J."/>
            <person name="Copeland N.G."/>
            <person name="Jenkins N.A."/>
            <person name="Pavlakis G.N."/>
            <person name="Felber B.K."/>
        </authorList>
    </citation>
    <scope>FUNCTION</scope>
    <scope>SUBCELLULAR LOCATION</scope>
    <scope>INTERACTION WITH ALYREF AND NXF1</scope>
</reference>
<reference key="11">
    <citation type="journal article" date="2009" name="Sci. Signal.">
        <title>Quantitative phosphoproteomic analysis of T cell receptor signaling reveals system-wide modulation of protein-protein interactions.</title>
        <authorList>
            <person name="Mayya V."/>
            <person name="Lundgren D.H."/>
            <person name="Hwang S.-I."/>
            <person name="Rezaul K."/>
            <person name="Wu L."/>
            <person name="Eng J.K."/>
            <person name="Rodionov V."/>
            <person name="Han D.K."/>
        </authorList>
    </citation>
    <scope>PHOSPHORYLATION [LARGE SCALE ANALYSIS] AT SER-267</scope>
    <scope>IDENTIFICATION BY MASS SPECTROMETRY [LARGE SCALE ANALYSIS]</scope>
    <source>
        <tissue>Leukemic T-cell</tissue>
    </source>
</reference>
<reference key="12">
    <citation type="journal article" date="2010" name="Sci. Signal.">
        <title>Quantitative phosphoproteomics reveals widespread full phosphorylation site occupancy during mitosis.</title>
        <authorList>
            <person name="Olsen J.V."/>
            <person name="Vermeulen M."/>
            <person name="Santamaria A."/>
            <person name="Kumar C."/>
            <person name="Miller M.L."/>
            <person name="Jensen L.J."/>
            <person name="Gnad F."/>
            <person name="Cox J."/>
            <person name="Jensen T.S."/>
            <person name="Nigg E.A."/>
            <person name="Brunak S."/>
            <person name="Mann M."/>
        </authorList>
    </citation>
    <scope>PHOSPHORYLATION [LARGE SCALE ANALYSIS] AT SER-109 AND SER-552</scope>
    <scope>IDENTIFICATION BY MASS SPECTROMETRY [LARGE SCALE ANALYSIS]</scope>
    <source>
        <tissue>Cervix carcinoma</tissue>
    </source>
</reference>
<reference key="13">
    <citation type="journal article" date="2011" name="J. Biol. Chem.">
        <title>The RNA binding motif protein 15B (RBM15B/OTT3) is a functional competitor of serine-arginine (SR) proteins and antagonizes the positive effect of the CDK11p110-cyclin L2alpha complex on splicing.</title>
        <authorList>
            <person name="Loyer P."/>
            <person name="Busson A."/>
            <person name="Trembley J.H."/>
            <person name="Hyle J."/>
            <person name="Grenet J."/>
            <person name="Zhao W."/>
            <person name="Ribault C."/>
            <person name="Montier T."/>
            <person name="Kidd V.J."/>
            <person name="Lahti J.M."/>
        </authorList>
    </citation>
    <scope>FUNCTION</scope>
</reference>
<reference key="14">
    <citation type="journal article" date="2011" name="Sci. Signal.">
        <title>System-wide temporal characterization of the proteome and phosphoproteome of human embryonic stem cell differentiation.</title>
        <authorList>
            <person name="Rigbolt K.T."/>
            <person name="Prokhorova T.A."/>
            <person name="Akimov V."/>
            <person name="Henningsen J."/>
            <person name="Johansen P.T."/>
            <person name="Kratchmarova I."/>
            <person name="Kassem M."/>
            <person name="Mann M."/>
            <person name="Olsen J.V."/>
            <person name="Blagoev B."/>
        </authorList>
    </citation>
    <scope>PHOSPHORYLATION [LARGE SCALE ANALYSIS] AT SER-109; SER-552 AND SER-562</scope>
    <scope>IDENTIFICATION BY MASS SPECTROMETRY [LARGE SCALE ANALYSIS]</scope>
</reference>
<reference key="15">
    <citation type="journal article" date="2013" name="J. Proteome Res.">
        <title>Toward a comprehensive characterization of a human cancer cell phosphoproteome.</title>
        <authorList>
            <person name="Zhou H."/>
            <person name="Di Palma S."/>
            <person name="Preisinger C."/>
            <person name="Peng M."/>
            <person name="Polat A.N."/>
            <person name="Heck A.J."/>
            <person name="Mohammed S."/>
        </authorList>
    </citation>
    <scope>PHOSPHORYLATION [LARGE SCALE ANALYSIS] AT THR-532; SER-556 AND SER-562</scope>
    <scope>IDENTIFICATION BY MASS SPECTROMETRY [LARGE SCALE ANALYSIS]</scope>
    <source>
        <tissue>Cervix carcinoma</tissue>
        <tissue>Erythroleukemia</tissue>
    </source>
</reference>
<reference key="16">
    <citation type="journal article" date="2014" name="J. Proteomics">
        <title>An enzyme assisted RP-RPLC approach for in-depth analysis of human liver phosphoproteome.</title>
        <authorList>
            <person name="Bian Y."/>
            <person name="Song C."/>
            <person name="Cheng K."/>
            <person name="Dong M."/>
            <person name="Wang F."/>
            <person name="Huang J."/>
            <person name="Sun D."/>
            <person name="Wang L."/>
            <person name="Ye M."/>
            <person name="Zou H."/>
        </authorList>
    </citation>
    <scope>PHOSPHORYLATION [LARGE SCALE ANALYSIS] AT SER-109</scope>
    <scope>IDENTIFICATION BY MASS SPECTROMETRY [LARGE SCALE ANALYSIS]</scope>
    <source>
        <tissue>Liver</tissue>
    </source>
</reference>
<reference key="17">
    <citation type="journal article" date="2017" name="Nat. Struct. Mol. Biol.">
        <title>Site-specific mapping of the human SUMO proteome reveals co-modification with phosphorylation.</title>
        <authorList>
            <person name="Hendriks I.A."/>
            <person name="Lyon D."/>
            <person name="Young C."/>
            <person name="Jensen L.J."/>
            <person name="Vertegaal A.C."/>
            <person name="Nielsen M.L."/>
        </authorList>
    </citation>
    <scope>SUMOYLATION [LARGE SCALE ANALYSIS] AT LYS-213 AND LYS-702</scope>
    <scope>IDENTIFICATION BY MASS SPECTROMETRY [LARGE SCALE ANALYSIS]</scope>
</reference>
<reference key="18">
    <citation type="journal article" date="2016" name="Nature">
        <title>m(6)A RNA methylation promotes XIST-mediated transcriptional repression.</title>
        <authorList>
            <person name="Patil D.P."/>
            <person name="Chen C.K."/>
            <person name="Pickering B.F."/>
            <person name="Chow A."/>
            <person name="Jackson C."/>
            <person name="Guttman M."/>
            <person name="Jaffrey S.R."/>
        </authorList>
    </citation>
    <scope>FUNCTION</scope>
    <scope>RNA-BINDING</scope>
    <scope>IDENTIFICATION IN THE WMM COMPLEX</scope>
</reference>
<comment type="function">
    <text evidence="7 8 9 14">RNA-binding protein that acts as a key regulator of N6-methyladenosine (m6A) methylation of RNAs, thereby regulating different processes, such as alternative splicing of mRNAs and X chromosome inactivation mediated by Xist RNA (PubMed:16129689, PubMed:27602518). Associated component of the WMM complex, a complex that mediates N6-methyladenosine (m6A) methylation of RNAs, a modification that plays a role in the efficiency of mRNA splicing and RNA processing (PubMed:27602518). Plays a key role in m6A methylation, possibly by binding target RNAs and recruiting the WMM complex (PubMed:27602518). Involved in random X inactivation mediated by Xist RNA: acts by binding Xist RNA and recruiting the WMM complex, which mediates m6A methylation, leading to target YTHDC1 reader on Xist RNA and promoting transcription repression activity of Xist (PubMed:27602518). Functions in the regulation of alternative or illicit splicing, possibly by regulating m6A methylation (PubMed:16129689). Inhibits pre-mRNA splicing (PubMed:21044963). Also functions as a mRNA export factor by acting as a cofactor for the nuclear export receptor NXF1 (PubMed:19586903).</text>
</comment>
<comment type="subunit">
    <text evidence="6 7 9">Component of the WMM complex, a N6-methyltransferase complex composed of a catalytic subcomplex, named MAC, and of an associated subcomplex, named MACOM (PubMed:27602518). The MAC subcomplex is composed of METTL3 and METTL14 (PubMed:27602518). The MACOM subcomplex is composed of WTAP, ZC3H13, CBLL1/HAKAI, VIRMA, and, in some cases of RBM15 (RBM15 or RBM15B) (PubMed:27602518). May interact with NCOR2 (PubMed:16129689). Interacts with NXF1, the interaction is required to promote mRNA export (PubMed:19586903).</text>
</comment>
<comment type="subunit">
    <text evidence="6">(Microbial infection) Interacts (via the SPOC domain) with Epstein-Barr virus BMLF1 (via the N-terminus); the interaction is direct.</text>
</comment>
<comment type="interaction">
    <interactant intactId="EBI-726721">
        <id>Q8NDT2</id>
    </interactant>
    <interactant intactId="EBI-741200">
        <id>Q8IVL1</id>
        <label>NAV2</label>
    </interactant>
    <organismsDiffer>false</organismsDiffer>
    <experiments>3</experiments>
</comment>
<comment type="interaction">
    <interactant intactId="EBI-10269922">
        <id>Q8NDT2-2</id>
    </interactant>
    <interactant intactId="EBI-396137">
        <id>Q9UJX2</id>
        <label>CDC23</label>
    </interactant>
    <organismsDiffer>false</organismsDiffer>
    <experiments>3</experiments>
</comment>
<comment type="interaction">
    <interactant intactId="EBI-10269922">
        <id>Q8NDT2-2</id>
    </interactant>
    <interactant intactId="EBI-739789">
        <id>Q92997</id>
        <label>DVL3</label>
    </interactant>
    <organismsDiffer>false</organismsDiffer>
    <experiments>3</experiments>
</comment>
<comment type="interaction">
    <interactant intactId="EBI-10269922">
        <id>Q8NDT2-2</id>
    </interactant>
    <interactant intactId="EBI-741200">
        <id>Q8IVL1</id>
        <label>NAV2</label>
    </interactant>
    <organismsDiffer>false</organismsDiffer>
    <experiments>3</experiments>
</comment>
<comment type="interaction">
    <interactant intactId="EBI-10269922">
        <id>Q8NDT2-2</id>
    </interactant>
    <interactant intactId="EBI-720609">
        <id>O76024</id>
        <label>WFS1</label>
    </interactant>
    <organismsDiffer>false</organismsDiffer>
    <experiments>3</experiments>
</comment>
<comment type="subcellular location">
    <subcellularLocation>
        <location evidence="6">Nucleus</location>
        <location evidence="6">Nucleoplasm</location>
    </subcellularLocation>
    <subcellularLocation>
        <location evidence="7">Nucleus speckle</location>
    </subcellularLocation>
    <subcellularLocation>
        <location evidence="7">Nucleus envelope</location>
    </subcellularLocation>
    <text evidence="6">Colocalizes with BMLF1 in the nucleus. Localized in the nucleoplasm with a granular staining pattern and excluded from the nucleoli.</text>
</comment>
<comment type="alternative products">
    <event type="alternative splicing"/>
    <isoform>
        <id>Q8NDT2-1</id>
        <name>1</name>
        <sequence type="displayed"/>
    </isoform>
    <isoform>
        <id>Q8NDT2-2</id>
        <name>2</name>
        <sequence type="described" ref="VSP_053878"/>
    </isoform>
</comment>
<comment type="tissue specificity">
    <text evidence="6">Ubiquitously expressed.</text>
</comment>
<comment type="similarity">
    <text evidence="13">Belongs to the RRM Spen family.</text>
</comment>
<comment type="sequence caution" evidence="13">
    <conflict type="erroneous initiation">
        <sequence resource="EMBL-CDS" id="AAH01367"/>
    </conflict>
</comment>
<comment type="sequence caution" evidence="13">
    <conflict type="miscellaneous discrepancy">
        <sequence resource="EMBL-CDS" id="AAS50153"/>
    </conflict>
    <text>Contaminating sequence. Sequence of unknown origin in the C-terminal part.</text>
</comment>
<comment type="sequence caution" evidence="13">
    <conflict type="erroneous initiation">
        <sequence resource="EMBL-CDS" id="CAD38547"/>
    </conflict>
</comment>
<feature type="chain" id="PRO_0000081778" description="Putative RNA-binding protein 15B">
    <location>
        <begin position="1"/>
        <end position="890"/>
    </location>
</feature>
<feature type="domain" description="RRM 1" evidence="3">
    <location>
        <begin position="139"/>
        <end position="219"/>
    </location>
</feature>
<feature type="domain" description="RRM 2" evidence="3">
    <location>
        <begin position="337"/>
        <end position="414"/>
    </location>
</feature>
<feature type="domain" description="RRM 3" evidence="3">
    <location>
        <begin position="418"/>
        <end position="492"/>
    </location>
</feature>
<feature type="domain" description="SPOC" evidence="4">
    <location>
        <begin position="711"/>
        <end position="889"/>
    </location>
</feature>
<feature type="region of interest" description="Disordered" evidence="5">
    <location>
        <begin position="1"/>
        <end position="133"/>
    </location>
</feature>
<feature type="region of interest" description="Disordered" evidence="5">
    <location>
        <begin position="219"/>
        <end position="253"/>
    </location>
</feature>
<feature type="region of interest" description="Disordered" evidence="5">
    <location>
        <begin position="547"/>
        <end position="705"/>
    </location>
</feature>
<feature type="region of interest" description="Interaction with Epstein-Barr virus BMLF1">
    <location>
        <begin position="722"/>
        <end position="890"/>
    </location>
</feature>
<feature type="short sequence motif" description="Nuclear localization signal" evidence="2">
    <location>
        <begin position="593"/>
        <end position="597"/>
    </location>
</feature>
<feature type="compositionally biased region" description="Low complexity" evidence="5">
    <location>
        <begin position="10"/>
        <end position="20"/>
    </location>
</feature>
<feature type="compositionally biased region" description="Basic and acidic residues" evidence="5">
    <location>
        <begin position="22"/>
        <end position="34"/>
    </location>
</feature>
<feature type="compositionally biased region" description="Basic and acidic residues" evidence="5">
    <location>
        <begin position="66"/>
        <end position="78"/>
    </location>
</feature>
<feature type="compositionally biased region" description="Gly residues" evidence="5">
    <location>
        <begin position="86"/>
        <end position="99"/>
    </location>
</feature>
<feature type="compositionally biased region" description="Pro residues" evidence="5">
    <location>
        <begin position="113"/>
        <end position="124"/>
    </location>
</feature>
<feature type="compositionally biased region" description="Low complexity" evidence="5">
    <location>
        <begin position="226"/>
        <end position="237"/>
    </location>
</feature>
<feature type="compositionally biased region" description="Pro residues" evidence="5">
    <location>
        <begin position="238"/>
        <end position="247"/>
    </location>
</feature>
<feature type="compositionally biased region" description="Basic and acidic residues" evidence="5">
    <location>
        <begin position="573"/>
        <end position="616"/>
    </location>
</feature>
<feature type="compositionally biased region" description="Basic and acidic residues" evidence="5">
    <location>
        <begin position="626"/>
        <end position="646"/>
    </location>
</feature>
<feature type="compositionally biased region" description="Low complexity" evidence="5">
    <location>
        <begin position="647"/>
        <end position="657"/>
    </location>
</feature>
<feature type="compositionally biased region" description="Basic and acidic residues" evidence="5">
    <location>
        <begin position="671"/>
        <end position="703"/>
    </location>
</feature>
<feature type="modified residue" description="Phosphoserine" evidence="17 18 20">
    <location>
        <position position="109"/>
    </location>
</feature>
<feature type="modified residue" description="Phosphoserine" evidence="1">
    <location>
        <position position="113"/>
    </location>
</feature>
<feature type="modified residue" description="Phosphoserine" evidence="1">
    <location>
        <position position="265"/>
    </location>
</feature>
<feature type="modified residue" description="Phosphoserine" evidence="16">
    <location>
        <position position="267"/>
    </location>
</feature>
<feature type="modified residue" description="Phosphothreonine" evidence="19">
    <location>
        <position position="532"/>
    </location>
</feature>
<feature type="modified residue" description="Phosphoserine" evidence="17 18">
    <location>
        <position position="552"/>
    </location>
</feature>
<feature type="modified residue" description="Phosphoserine" evidence="19">
    <location>
        <position position="556"/>
    </location>
</feature>
<feature type="modified residue" description="Phosphoserine" evidence="18 19">
    <location>
        <position position="562"/>
    </location>
</feature>
<feature type="cross-link" description="Glycyl lysine isopeptide (Lys-Gly) (interchain with G-Cter in SUMO2)" evidence="21">
    <location>
        <position position="213"/>
    </location>
</feature>
<feature type="cross-link" description="Glycyl lysine isopeptide (Lys-Gly) (interchain with G-Cter in SUMO2)" evidence="21">
    <location>
        <position position="702"/>
    </location>
</feature>
<feature type="splice variant" id="VSP_053878" description="In isoform 2." evidence="10">
    <location>
        <begin position="1"/>
        <end position="327"/>
    </location>
</feature>
<feature type="sequence conflict" description="In Ref. 2; AAI39837." evidence="13" ref="2">
    <original>R</original>
    <variation>K</variation>
    <location>
        <position position="593"/>
    </location>
</feature>
<organism>
    <name type="scientific">Homo sapiens</name>
    <name type="common">Human</name>
    <dbReference type="NCBI Taxonomy" id="9606"/>
    <lineage>
        <taxon>Eukaryota</taxon>
        <taxon>Metazoa</taxon>
        <taxon>Chordata</taxon>
        <taxon>Craniata</taxon>
        <taxon>Vertebrata</taxon>
        <taxon>Euteleostomi</taxon>
        <taxon>Mammalia</taxon>
        <taxon>Eutheria</taxon>
        <taxon>Euarchontoglires</taxon>
        <taxon>Primates</taxon>
        <taxon>Haplorrhini</taxon>
        <taxon>Catarrhini</taxon>
        <taxon>Hominidae</taxon>
        <taxon>Homo</taxon>
    </lineage>
</organism>
<gene>
    <name evidence="11 12 15" type="primary">RBM15B</name>
    <name evidence="11 12" type="synonym">OTT3</name>
</gene>
<name>RB15B_HUMAN</name>
<keyword id="KW-0025">Alternative splicing</keyword>
<keyword id="KW-0945">Host-virus interaction</keyword>
<keyword id="KW-1017">Isopeptide bond</keyword>
<keyword id="KW-0507">mRNA processing</keyword>
<keyword id="KW-0508">mRNA splicing</keyword>
<keyword id="KW-0539">Nucleus</keyword>
<keyword id="KW-0597">Phosphoprotein</keyword>
<keyword id="KW-1267">Proteomics identification</keyword>
<keyword id="KW-1185">Reference proteome</keyword>
<keyword id="KW-0677">Repeat</keyword>
<keyword id="KW-0694">RNA-binding</keyword>
<keyword id="KW-0804">Transcription</keyword>
<keyword id="KW-0805">Transcription regulation</keyword>
<keyword id="KW-0832">Ubl conjugation</keyword>